<gene>
    <name type="primary">yohK</name>
    <name type="ordered locus">b2142</name>
    <name type="ordered locus">JW2130</name>
</gene>
<accession>P0AD19</accession>
<accession>P33373</accession>
<accession>Q2MAT7</accession>
<proteinExistence type="evidence at protein level"/>
<protein>
    <recommendedName>
        <fullName>Inner membrane protein YohK</fullName>
    </recommendedName>
</protein>
<comment type="subcellular location">
    <subcellularLocation>
        <location>Cell inner membrane</location>
        <topology>Multi-pass membrane protein</topology>
    </subcellularLocation>
</comment>
<comment type="similarity">
    <text evidence="2">Belongs to the YohK (E.coli)/YwbG (IPA-22R) (B.subtilis) family.</text>
</comment>
<evidence type="ECO:0000255" key="1"/>
<evidence type="ECO:0000305" key="2"/>
<sequence length="231" mass="24470">MMANIWWSLPLTLIVFFAARKLAARYKFPLLNPLLVAMVVIIPFLMLTGISYDSYFKGSEVLNDLLQPAVVALAYPLYEQLHQIRARWKSIITICFIGSVVAMVTGTSVALLMGASPEIAASILPKSVTTPIAMAVGGSIGGIPAISAVCVIFVGILGAVFGHTLLNAMRIRTKAARGLAMGTASHALGTARCAELDYQEGAFSSLALVLCGIITSLIAPFLFPIILAVMG</sequence>
<feature type="chain" id="PRO_0000169140" description="Inner membrane protein YohK">
    <location>
        <begin position="1"/>
        <end position="231"/>
    </location>
</feature>
<feature type="topological domain" description="Periplasmic" evidence="1">
    <location>
        <position position="1"/>
    </location>
</feature>
<feature type="transmembrane region" description="Helical" evidence="1">
    <location>
        <begin position="2"/>
        <end position="22"/>
    </location>
</feature>
<feature type="topological domain" description="Cytoplasmic" evidence="1">
    <location>
        <begin position="23"/>
        <end position="29"/>
    </location>
</feature>
<feature type="transmembrane region" description="Helical" evidence="1">
    <location>
        <begin position="30"/>
        <end position="50"/>
    </location>
</feature>
<feature type="topological domain" description="Periplasmic" evidence="1">
    <location>
        <begin position="51"/>
        <end position="90"/>
    </location>
</feature>
<feature type="transmembrane region" description="Helical" evidence="1">
    <location>
        <begin position="91"/>
        <end position="111"/>
    </location>
</feature>
<feature type="topological domain" description="Cytoplasmic" evidence="1">
    <location>
        <begin position="112"/>
        <end position="118"/>
    </location>
</feature>
<feature type="transmembrane region" description="Helical" evidence="1">
    <location>
        <begin position="119"/>
        <end position="139"/>
    </location>
</feature>
<feature type="transmembrane region" description="Helical" evidence="1">
    <location>
        <begin position="140"/>
        <end position="160"/>
    </location>
</feature>
<feature type="topological domain" description="Cytoplasmic" evidence="1">
    <location>
        <begin position="161"/>
        <end position="208"/>
    </location>
</feature>
<feature type="transmembrane region" description="Helical" evidence="1">
    <location>
        <begin position="209"/>
        <end position="229"/>
    </location>
</feature>
<feature type="topological domain" description="Periplasmic" evidence="1">
    <location>
        <begin position="230"/>
        <end position="231"/>
    </location>
</feature>
<feature type="sequence conflict" description="In Ref. 1." evidence="2" ref="1">
    <original>LALVLCGIITSLIAPFLFPIILAVMG</original>
    <variation>ASAGVMRDNYFADRTVPFPDYSGSNGLKFAMRRAFLMYVSRVA</variation>
    <location>
        <begin position="206"/>
        <end position="231"/>
    </location>
</feature>
<dbReference type="EMBL" id="U00007">
    <property type="protein sequence ID" value="AAA60505.1"/>
    <property type="molecule type" value="Genomic_DNA"/>
</dbReference>
<dbReference type="EMBL" id="U00096">
    <property type="protein sequence ID" value="AAC75203.1"/>
    <property type="molecule type" value="Genomic_DNA"/>
</dbReference>
<dbReference type="EMBL" id="AP009048">
    <property type="protein sequence ID" value="BAE76619.1"/>
    <property type="molecule type" value="Genomic_DNA"/>
</dbReference>
<dbReference type="EMBL" id="X16419">
    <property type="status" value="NOT_ANNOTATED_CDS"/>
    <property type="molecule type" value="Genomic_DNA"/>
</dbReference>
<dbReference type="PIR" id="E64982">
    <property type="entry name" value="E64982"/>
</dbReference>
<dbReference type="RefSeq" id="NP_416647.1">
    <property type="nucleotide sequence ID" value="NC_000913.3"/>
</dbReference>
<dbReference type="RefSeq" id="WP_000968208.1">
    <property type="nucleotide sequence ID" value="NZ_STEB01000002.1"/>
</dbReference>
<dbReference type="BioGRID" id="4260834">
    <property type="interactions" value="16"/>
</dbReference>
<dbReference type="FunCoup" id="P0AD19">
    <property type="interactions" value="89"/>
</dbReference>
<dbReference type="STRING" id="511145.b2142"/>
<dbReference type="PaxDb" id="511145-b2142"/>
<dbReference type="EnsemblBacteria" id="AAC75203">
    <property type="protein sequence ID" value="AAC75203"/>
    <property type="gene ID" value="b2142"/>
</dbReference>
<dbReference type="GeneID" id="949125"/>
<dbReference type="KEGG" id="ecj:JW2130"/>
<dbReference type="KEGG" id="eco:b2142"/>
<dbReference type="KEGG" id="ecoc:C3026_12005"/>
<dbReference type="PATRIC" id="fig|1411691.4.peg.100"/>
<dbReference type="EchoBASE" id="EB1959"/>
<dbReference type="eggNOG" id="COG1346">
    <property type="taxonomic scope" value="Bacteria"/>
</dbReference>
<dbReference type="HOGENOM" id="CLU_082099_3_0_6"/>
<dbReference type="InParanoid" id="P0AD19"/>
<dbReference type="OMA" id="AQFVHFM"/>
<dbReference type="OrthoDB" id="9811701at2"/>
<dbReference type="PhylomeDB" id="P0AD19"/>
<dbReference type="BioCyc" id="EcoCyc:EG12024-MONOMER"/>
<dbReference type="PRO" id="PR:P0AD19"/>
<dbReference type="Proteomes" id="UP000000625">
    <property type="component" value="Chromosome"/>
</dbReference>
<dbReference type="GO" id="GO:0005886">
    <property type="term" value="C:plasma membrane"/>
    <property type="evidence" value="ECO:0000255"/>
    <property type="project" value="EcoCyc"/>
</dbReference>
<dbReference type="InterPro" id="IPR007300">
    <property type="entry name" value="CidB/LrgB"/>
</dbReference>
<dbReference type="InterPro" id="IPR005261">
    <property type="entry name" value="YohK-like"/>
</dbReference>
<dbReference type="NCBIfam" id="TIGR00659">
    <property type="entry name" value="CidB/LrgB family autolysis modulator"/>
    <property type="match status" value="1"/>
</dbReference>
<dbReference type="NCBIfam" id="NF007983">
    <property type="entry name" value="PRK10711.1"/>
    <property type="match status" value="1"/>
</dbReference>
<dbReference type="PANTHER" id="PTHR30249:SF0">
    <property type="entry name" value="PLASTIDAL GLYCOLATE_GLYCERATE TRANSLOCATOR 1, CHLOROPLASTIC"/>
    <property type="match status" value="1"/>
</dbReference>
<dbReference type="PANTHER" id="PTHR30249">
    <property type="entry name" value="PUTATIVE SEROTONIN TRANSPORTER"/>
    <property type="match status" value="1"/>
</dbReference>
<dbReference type="Pfam" id="PF04172">
    <property type="entry name" value="LrgB"/>
    <property type="match status" value="1"/>
</dbReference>
<name>YOHK_ECOLI</name>
<organism>
    <name type="scientific">Escherichia coli (strain K12)</name>
    <dbReference type="NCBI Taxonomy" id="83333"/>
    <lineage>
        <taxon>Bacteria</taxon>
        <taxon>Pseudomonadati</taxon>
        <taxon>Pseudomonadota</taxon>
        <taxon>Gammaproteobacteria</taxon>
        <taxon>Enterobacterales</taxon>
        <taxon>Enterobacteriaceae</taxon>
        <taxon>Escherichia</taxon>
    </lineage>
</organism>
<keyword id="KW-0997">Cell inner membrane</keyword>
<keyword id="KW-1003">Cell membrane</keyword>
<keyword id="KW-0472">Membrane</keyword>
<keyword id="KW-1185">Reference proteome</keyword>
<keyword id="KW-0812">Transmembrane</keyword>
<keyword id="KW-1133">Transmembrane helix</keyword>
<reference key="1">
    <citation type="submission" date="1993-10" db="EMBL/GenBank/DDBJ databases">
        <authorList>
            <person name="Richterich P."/>
            <person name="Lakey N."/>
            <person name="Gryan G."/>
            <person name="Jaehn L."/>
            <person name="Mintz L."/>
            <person name="Robison K."/>
            <person name="Church G.M."/>
        </authorList>
    </citation>
    <scope>NUCLEOTIDE SEQUENCE [GENOMIC DNA]</scope>
    <source>
        <strain>K12 / BHB2600</strain>
    </source>
</reference>
<reference key="2">
    <citation type="journal article" date="1997" name="Science">
        <title>The complete genome sequence of Escherichia coli K-12.</title>
        <authorList>
            <person name="Blattner F.R."/>
            <person name="Plunkett G. III"/>
            <person name="Bloch C.A."/>
            <person name="Perna N.T."/>
            <person name="Burland V."/>
            <person name="Riley M."/>
            <person name="Collado-Vides J."/>
            <person name="Glasner J.D."/>
            <person name="Rode C.K."/>
            <person name="Mayhew G.F."/>
            <person name="Gregor J."/>
            <person name="Davis N.W."/>
            <person name="Kirkpatrick H.A."/>
            <person name="Goeden M.A."/>
            <person name="Rose D.J."/>
            <person name="Mau B."/>
            <person name="Shao Y."/>
        </authorList>
    </citation>
    <scope>NUCLEOTIDE SEQUENCE [LARGE SCALE GENOMIC DNA]</scope>
    <source>
        <strain>K12 / MG1655 / ATCC 47076</strain>
    </source>
</reference>
<reference key="3">
    <citation type="journal article" date="2006" name="Mol. Syst. Biol.">
        <title>Highly accurate genome sequences of Escherichia coli K-12 strains MG1655 and W3110.</title>
        <authorList>
            <person name="Hayashi K."/>
            <person name="Morooka N."/>
            <person name="Yamamoto Y."/>
            <person name="Fujita K."/>
            <person name="Isono K."/>
            <person name="Choi S."/>
            <person name="Ohtsubo E."/>
            <person name="Baba T."/>
            <person name="Wanner B.L."/>
            <person name="Mori H."/>
            <person name="Horiuchi T."/>
        </authorList>
    </citation>
    <scope>NUCLEOTIDE SEQUENCE [LARGE SCALE GENOMIC DNA]</scope>
    <source>
        <strain>K12 / W3110 / ATCC 27325 / DSM 5911</strain>
    </source>
</reference>
<reference key="4">
    <citation type="journal article" date="1989" name="Mol. Microbiol.">
        <title>CRP/cAMP- and CytR-regulated promoters in Escherichia coli K12: the cdd promoter.</title>
        <authorList>
            <person name="Valentin-Hansen P."/>
            <person name="Holst B."/>
            <person name="Josephsen J."/>
            <person name="Hammer K."/>
            <person name="Albrechtsen B."/>
        </authorList>
    </citation>
    <scope>NUCLEOTIDE SEQUENCE [GENOMIC DNA] OF 192-231</scope>
    <source>
        <strain>K12</strain>
    </source>
</reference>
<reference key="5">
    <citation type="journal article" date="2005" name="Science">
        <title>Global topology analysis of the Escherichia coli inner membrane proteome.</title>
        <authorList>
            <person name="Daley D.O."/>
            <person name="Rapp M."/>
            <person name="Granseth E."/>
            <person name="Melen K."/>
            <person name="Drew D."/>
            <person name="von Heijne G."/>
        </authorList>
    </citation>
    <scope>TOPOLOGY [LARGE SCALE ANALYSIS]</scope>
    <source>
        <strain>K12 / MG1655 / ATCC 47076</strain>
    </source>
</reference>